<reference key="1">
    <citation type="journal article" date="2007" name="J. Bacteriol.">
        <title>The complete genome sequence of Campylobacter jejuni strain 81116 (NCTC11828).</title>
        <authorList>
            <person name="Pearson B.M."/>
            <person name="Gaskin D.J.H."/>
            <person name="Segers R.P.A.M."/>
            <person name="Wells J.M."/>
            <person name="Nuijten P.J.M."/>
            <person name="van Vliet A.H.M."/>
        </authorList>
    </citation>
    <scope>NUCLEOTIDE SEQUENCE [LARGE SCALE GENOMIC DNA]</scope>
    <source>
        <strain>81116 / NCTC 11828</strain>
    </source>
</reference>
<dbReference type="EC" id="5.4.99.27" evidence="1"/>
<dbReference type="EMBL" id="CP000814">
    <property type="protein sequence ID" value="ABV52961.1"/>
    <property type="molecule type" value="Genomic_DNA"/>
</dbReference>
<dbReference type="RefSeq" id="WP_002867024.1">
    <property type="nucleotide sequence ID" value="NC_009839.1"/>
</dbReference>
<dbReference type="SMR" id="A8FNC4"/>
<dbReference type="KEGG" id="cju:C8J_1363"/>
<dbReference type="HOGENOM" id="CLU_005281_4_0_7"/>
<dbReference type="GO" id="GO:0005829">
    <property type="term" value="C:cytosol"/>
    <property type="evidence" value="ECO:0007669"/>
    <property type="project" value="TreeGrafter"/>
</dbReference>
<dbReference type="GO" id="GO:0003723">
    <property type="term" value="F:RNA binding"/>
    <property type="evidence" value="ECO:0007669"/>
    <property type="project" value="InterPro"/>
</dbReference>
<dbReference type="GO" id="GO:0160150">
    <property type="term" value="F:tRNA pseudouridine(13) synthase activity"/>
    <property type="evidence" value="ECO:0007669"/>
    <property type="project" value="UniProtKB-EC"/>
</dbReference>
<dbReference type="GO" id="GO:0031119">
    <property type="term" value="P:tRNA pseudouridine synthesis"/>
    <property type="evidence" value="ECO:0007669"/>
    <property type="project" value="UniProtKB-UniRule"/>
</dbReference>
<dbReference type="CDD" id="cd02575">
    <property type="entry name" value="PseudoU_synth_EcTruD"/>
    <property type="match status" value="1"/>
</dbReference>
<dbReference type="FunFam" id="3.30.2350.20:FF:000008">
    <property type="entry name" value="tRNA pseudouridine synthase D"/>
    <property type="match status" value="1"/>
</dbReference>
<dbReference type="Gene3D" id="3.30.2350.20">
    <property type="entry name" value="TruD, catalytic domain"/>
    <property type="match status" value="1"/>
</dbReference>
<dbReference type="HAMAP" id="MF_01082">
    <property type="entry name" value="TruD"/>
    <property type="match status" value="1"/>
</dbReference>
<dbReference type="InterPro" id="IPR020103">
    <property type="entry name" value="PsdUridine_synth_cat_dom_sf"/>
</dbReference>
<dbReference type="InterPro" id="IPR001656">
    <property type="entry name" value="PsdUridine_synth_TruD"/>
</dbReference>
<dbReference type="InterPro" id="IPR020119">
    <property type="entry name" value="PsdUridine_synth_TruD_CS"/>
</dbReference>
<dbReference type="InterPro" id="IPR011760">
    <property type="entry name" value="PsdUridine_synth_TruD_insert"/>
</dbReference>
<dbReference type="InterPro" id="IPR042214">
    <property type="entry name" value="TruD_catalytic"/>
</dbReference>
<dbReference type="InterPro" id="IPR050170">
    <property type="entry name" value="TruD_pseudoU_synthase"/>
</dbReference>
<dbReference type="NCBIfam" id="NF002154">
    <property type="entry name" value="PRK00984.1-3"/>
    <property type="match status" value="1"/>
</dbReference>
<dbReference type="NCBIfam" id="TIGR00094">
    <property type="entry name" value="tRNA_TruD_broad"/>
    <property type="match status" value="1"/>
</dbReference>
<dbReference type="PANTHER" id="PTHR47811">
    <property type="entry name" value="TRNA PSEUDOURIDINE SYNTHASE D"/>
    <property type="match status" value="1"/>
</dbReference>
<dbReference type="PANTHER" id="PTHR47811:SF1">
    <property type="entry name" value="TRNA PSEUDOURIDINE SYNTHASE D"/>
    <property type="match status" value="1"/>
</dbReference>
<dbReference type="Pfam" id="PF01142">
    <property type="entry name" value="TruD"/>
    <property type="match status" value="2"/>
</dbReference>
<dbReference type="SUPFAM" id="SSF55120">
    <property type="entry name" value="Pseudouridine synthase"/>
    <property type="match status" value="1"/>
</dbReference>
<dbReference type="PROSITE" id="PS50984">
    <property type="entry name" value="TRUD"/>
    <property type="match status" value="1"/>
</dbReference>
<dbReference type="PROSITE" id="PS01268">
    <property type="entry name" value="UPF0024"/>
    <property type="match status" value="1"/>
</dbReference>
<feature type="chain" id="PRO_1000084730" description="tRNA pseudouridine synthase D">
    <location>
        <begin position="1"/>
        <end position="372"/>
    </location>
</feature>
<feature type="domain" description="TRUD" evidence="1">
    <location>
        <begin position="160"/>
        <end position="330"/>
    </location>
</feature>
<feature type="active site" description="Nucleophile" evidence="1">
    <location>
        <position position="85"/>
    </location>
</feature>
<proteinExistence type="inferred from homology"/>
<accession>A8FNC4</accession>
<comment type="function">
    <text evidence="1">Responsible for synthesis of pseudouridine from uracil-13 in transfer RNAs.</text>
</comment>
<comment type="catalytic activity">
    <reaction evidence="1">
        <text>uridine(13) in tRNA = pseudouridine(13) in tRNA</text>
        <dbReference type="Rhea" id="RHEA:42540"/>
        <dbReference type="Rhea" id="RHEA-COMP:10105"/>
        <dbReference type="Rhea" id="RHEA-COMP:10106"/>
        <dbReference type="ChEBI" id="CHEBI:65314"/>
        <dbReference type="ChEBI" id="CHEBI:65315"/>
        <dbReference type="EC" id="5.4.99.27"/>
    </reaction>
</comment>
<comment type="similarity">
    <text evidence="1">Belongs to the pseudouridine synthase TruD family.</text>
</comment>
<keyword id="KW-0413">Isomerase</keyword>
<keyword id="KW-0819">tRNA processing</keyword>
<gene>
    <name evidence="1" type="primary">truD</name>
    <name type="ordered locus">C8J_1363</name>
</gene>
<evidence type="ECO:0000255" key="1">
    <source>
        <dbReference type="HAMAP-Rule" id="MF_01082"/>
    </source>
</evidence>
<sequence length="372" mass="43565">MNLEEENTIFKPLYSLKHSPINAYFSKNSDDFVVRERPLYEFSGKGEHLILHINKKDLTTNEALKILSETSGVKIRDFGYAGLKDKQGSTFQYLSMPKKFESFLSNFSHPKLKILEIFTHENKLRIGHLKGNTFFIRLKKVLPSDALKLEQALMNLDKQGFANYFGYQRFGKFGDNYKEGFEILRGKKMKNVKMKEFLISAFQSELFNRYLSKRVELSHFANDFSEKELIQIYKISKEEAKELKKQEQFFKLLKGEVLGHYPFGKCFLCEDLSAELERFKARDISAMGLLIGAKAYETGEGLALNLENEIFKDALEFKAKMQGSRRFMWGYLEELKWRYDEEKAHFCIEFFLQKGSYATVVLEEILHKNLFE</sequence>
<name>TRUD_CAMJ8</name>
<organism>
    <name type="scientific">Campylobacter jejuni subsp. jejuni serotype O:6 (strain 81116 / NCTC 11828)</name>
    <dbReference type="NCBI Taxonomy" id="407148"/>
    <lineage>
        <taxon>Bacteria</taxon>
        <taxon>Pseudomonadati</taxon>
        <taxon>Campylobacterota</taxon>
        <taxon>Epsilonproteobacteria</taxon>
        <taxon>Campylobacterales</taxon>
        <taxon>Campylobacteraceae</taxon>
        <taxon>Campylobacter</taxon>
    </lineage>
</organism>
<protein>
    <recommendedName>
        <fullName evidence="1">tRNA pseudouridine synthase D</fullName>
        <ecNumber evidence="1">5.4.99.27</ecNumber>
    </recommendedName>
    <alternativeName>
        <fullName evidence="1">tRNA pseudouridine(13) synthase</fullName>
    </alternativeName>
    <alternativeName>
        <fullName evidence="1">tRNA pseudouridylate synthase D</fullName>
    </alternativeName>
    <alternativeName>
        <fullName evidence="1">tRNA-uridine isomerase D</fullName>
    </alternativeName>
</protein>